<evidence type="ECO:0000255" key="1"/>
<evidence type="ECO:0000256" key="2">
    <source>
        <dbReference type="SAM" id="MobiDB-lite"/>
    </source>
</evidence>
<evidence type="ECO:0000269" key="3">
    <source>
    </source>
</evidence>
<evidence type="ECO:0000305" key="4"/>
<gene>
    <name type="primary">gnt12</name>
    <name type="ORF">DDB_G0268160</name>
</gene>
<keyword id="KW-0325">Glycoprotein</keyword>
<keyword id="KW-0472">Membrane</keyword>
<keyword id="KW-1185">Reference proteome</keyword>
<keyword id="KW-0735">Signal-anchor</keyword>
<keyword id="KW-0812">Transmembrane</keyword>
<keyword id="KW-1133">Transmembrane helix</keyword>
<feature type="chain" id="PRO_0000393407" description="Glycosyltransferase-like protein gnt12">
    <location>
        <begin position="1"/>
        <end position="550"/>
    </location>
</feature>
<feature type="topological domain" description="Cytoplasmic" evidence="1">
    <location>
        <begin position="1"/>
        <end position="36"/>
    </location>
</feature>
<feature type="transmembrane region" description="Helical; Signal-anchor for type II membrane protein" evidence="1">
    <location>
        <begin position="37"/>
        <end position="57"/>
    </location>
</feature>
<feature type="topological domain" description="Extracellular" evidence="1">
    <location>
        <begin position="58"/>
        <end position="550"/>
    </location>
</feature>
<feature type="region of interest" description="Disordered" evidence="2">
    <location>
        <begin position="1"/>
        <end position="29"/>
    </location>
</feature>
<feature type="region of interest" description="Disordered" evidence="2">
    <location>
        <begin position="81"/>
        <end position="100"/>
    </location>
</feature>
<feature type="compositionally biased region" description="Low complexity" evidence="2">
    <location>
        <begin position="8"/>
        <end position="25"/>
    </location>
</feature>
<feature type="compositionally biased region" description="Low complexity" evidence="2">
    <location>
        <begin position="81"/>
        <end position="97"/>
    </location>
</feature>
<feature type="glycosylation site" description="N-linked (GlcNAc...) asparagine" evidence="1">
    <location>
        <position position="233"/>
    </location>
</feature>
<feature type="glycosylation site" description="N-linked (GlcNAc...) asparagine" evidence="1">
    <location>
        <position position="322"/>
    </location>
</feature>
<feature type="glycosylation site" description="N-linked (GlcNAc...) asparagine" evidence="1">
    <location>
        <position position="426"/>
    </location>
</feature>
<dbReference type="EMBL" id="AAFI02000003">
    <property type="protein sequence ID" value="EAL73533.1"/>
    <property type="molecule type" value="Genomic_DNA"/>
</dbReference>
<dbReference type="RefSeq" id="XP_647598.1">
    <property type="nucleotide sequence ID" value="XM_642506.1"/>
</dbReference>
<dbReference type="SMR" id="Q55FD5"/>
<dbReference type="GlyCosmos" id="Q55FD5">
    <property type="glycosylation" value="3 sites, No reported glycans"/>
</dbReference>
<dbReference type="GlyGen" id="Q55FD5">
    <property type="glycosylation" value="3 sites"/>
</dbReference>
<dbReference type="PaxDb" id="44689-DDB0231850"/>
<dbReference type="EnsemblProtists" id="EAL73533">
    <property type="protein sequence ID" value="EAL73533"/>
    <property type="gene ID" value="DDB_G0268160"/>
</dbReference>
<dbReference type="GeneID" id="8616410"/>
<dbReference type="KEGG" id="ddi:DDB_G0268160"/>
<dbReference type="dictyBase" id="DDB_G0268160">
    <property type="gene designation" value="gnt12"/>
</dbReference>
<dbReference type="VEuPathDB" id="AmoebaDB:DDB_G0268160"/>
<dbReference type="eggNOG" id="KOG3765">
    <property type="taxonomic scope" value="Eukaryota"/>
</dbReference>
<dbReference type="HOGENOM" id="CLU_528327_0_0_1"/>
<dbReference type="InParanoid" id="Q55FD5"/>
<dbReference type="PhylomeDB" id="Q55FD5"/>
<dbReference type="PRO" id="PR:Q55FD5"/>
<dbReference type="Proteomes" id="UP000002195">
    <property type="component" value="Chromosome 1"/>
</dbReference>
<dbReference type="GO" id="GO:0016020">
    <property type="term" value="C:membrane"/>
    <property type="evidence" value="ECO:0007669"/>
    <property type="project" value="UniProtKB-SubCell"/>
</dbReference>
<dbReference type="GO" id="GO:0015020">
    <property type="term" value="F:glucuronosyltransferase activity"/>
    <property type="evidence" value="ECO:0000318"/>
    <property type="project" value="GO_Central"/>
</dbReference>
<dbReference type="GO" id="GO:0042285">
    <property type="term" value="F:xylosyltransferase activity"/>
    <property type="evidence" value="ECO:0000318"/>
    <property type="project" value="GO_Central"/>
</dbReference>
<dbReference type="GO" id="GO:0035269">
    <property type="term" value="P:protein O-linked mannosylation"/>
    <property type="evidence" value="ECO:0000318"/>
    <property type="project" value="GO_Central"/>
</dbReference>
<dbReference type="InterPro" id="IPR051292">
    <property type="entry name" value="Xyl/GlcA_transferase"/>
</dbReference>
<dbReference type="PANTHER" id="PTHR12270:SF50">
    <property type="entry name" value="GLYCOSYLTRANSFERASE-LIKE PROTEIN GNT12-RELATED"/>
    <property type="match status" value="1"/>
</dbReference>
<dbReference type="PANTHER" id="PTHR12270">
    <property type="entry name" value="GLYCOSYLTRANSFERASE-RELATED"/>
    <property type="match status" value="1"/>
</dbReference>
<dbReference type="Pfam" id="PF13896">
    <property type="entry name" value="Glyco_transf_49"/>
    <property type="match status" value="2"/>
</dbReference>
<name>GNT12_DICDI</name>
<reference key="1">
    <citation type="journal article" date="2005" name="Nature">
        <title>The genome of the social amoeba Dictyostelium discoideum.</title>
        <authorList>
            <person name="Eichinger L."/>
            <person name="Pachebat J.A."/>
            <person name="Gloeckner G."/>
            <person name="Rajandream M.A."/>
            <person name="Sucgang R."/>
            <person name="Berriman M."/>
            <person name="Song J."/>
            <person name="Olsen R."/>
            <person name="Szafranski K."/>
            <person name="Xu Q."/>
            <person name="Tunggal B."/>
            <person name="Kummerfeld S."/>
            <person name="Madera M."/>
            <person name="Konfortov B.A."/>
            <person name="Rivero F."/>
            <person name="Bankier A.T."/>
            <person name="Lehmann R."/>
            <person name="Hamlin N."/>
            <person name="Davies R."/>
            <person name="Gaudet P."/>
            <person name="Fey P."/>
            <person name="Pilcher K."/>
            <person name="Chen G."/>
            <person name="Saunders D."/>
            <person name="Sodergren E.J."/>
            <person name="Davis P."/>
            <person name="Kerhornou A."/>
            <person name="Nie X."/>
            <person name="Hall N."/>
            <person name="Anjard C."/>
            <person name="Hemphill L."/>
            <person name="Bason N."/>
            <person name="Farbrother P."/>
            <person name="Desany B."/>
            <person name="Just E."/>
            <person name="Morio T."/>
            <person name="Rost R."/>
            <person name="Churcher C.M."/>
            <person name="Cooper J."/>
            <person name="Haydock S."/>
            <person name="van Driessche N."/>
            <person name="Cronin A."/>
            <person name="Goodhead I."/>
            <person name="Muzny D.M."/>
            <person name="Mourier T."/>
            <person name="Pain A."/>
            <person name="Lu M."/>
            <person name="Harper D."/>
            <person name="Lindsay R."/>
            <person name="Hauser H."/>
            <person name="James K.D."/>
            <person name="Quiles M."/>
            <person name="Madan Babu M."/>
            <person name="Saito T."/>
            <person name="Buchrieser C."/>
            <person name="Wardroper A."/>
            <person name="Felder M."/>
            <person name="Thangavelu M."/>
            <person name="Johnson D."/>
            <person name="Knights A."/>
            <person name="Loulseged H."/>
            <person name="Mungall K.L."/>
            <person name="Oliver K."/>
            <person name="Price C."/>
            <person name="Quail M.A."/>
            <person name="Urushihara H."/>
            <person name="Hernandez J."/>
            <person name="Rabbinowitsch E."/>
            <person name="Steffen D."/>
            <person name="Sanders M."/>
            <person name="Ma J."/>
            <person name="Kohara Y."/>
            <person name="Sharp S."/>
            <person name="Simmonds M.N."/>
            <person name="Spiegler S."/>
            <person name="Tivey A."/>
            <person name="Sugano S."/>
            <person name="White B."/>
            <person name="Walker D."/>
            <person name="Woodward J.R."/>
            <person name="Winckler T."/>
            <person name="Tanaka Y."/>
            <person name="Shaulsky G."/>
            <person name="Schleicher M."/>
            <person name="Weinstock G.M."/>
            <person name="Rosenthal A."/>
            <person name="Cox E.C."/>
            <person name="Chisholm R.L."/>
            <person name="Gibbs R.A."/>
            <person name="Loomis W.F."/>
            <person name="Platzer M."/>
            <person name="Kay R.R."/>
            <person name="Williams J.G."/>
            <person name="Dear P.H."/>
            <person name="Noegel A.A."/>
            <person name="Barrell B.G."/>
            <person name="Kuspa A."/>
        </authorList>
    </citation>
    <scope>NUCLEOTIDE SEQUENCE [LARGE SCALE GENOMIC DNA]</scope>
    <source>
        <strain>AX4</strain>
    </source>
</reference>
<reference key="2">
    <citation type="journal article" date="2007" name="Biochem. Biophys. Res. Commun.">
        <title>Dictyostelium gnt15 encodes a protein with similarity to LARGE and plays an essential role in development.</title>
        <authorList>
            <person name="Pang T.L."/>
            <person name="Wu C.J."/>
            <person name="Chen P.A."/>
            <person name="Weng Y.L."/>
            <person name="Chen M.Y."/>
        </authorList>
    </citation>
    <scope>DEVELOPMENTAL STAGE</scope>
</reference>
<accession>Q55FD5</accession>
<proteinExistence type="evidence at transcript level"/>
<sequence length="550" mass="64059">MSYLPLYNNNNNINNNNNNNNNRINNNKEKGVKNKPFQIFISIVFIVFLCFFLIWSMEAKKDKNIKINKISNIDQKNSPNLINEPINNNKNNKNNIPKNHKQFKNKKGLIKSFQYEPFAYKALRNEDGFEISIVTHVPIENMEKIAMIADIWRAPISASVLIKNKNDIDSVYKLIRNSLSVSEFVDFHFLYWNEDSDSIINNNNNNIINKNKINTNEEDNLNYYYYPINSLRNLSLKNSKTDWILTIDIDYLPNYGIYQYLERTLYTSLQPSKKLINSDLVSFVVPSFQLTSISTKTAPTTISTQSPTPISTLKKTTLENKNKTISTMSTTMSTTTTTSATTNTKITTKINKPLKKVNRYDLPETKFQLQTFIYDDKLIEILNKKSCLKCQSPTNYNKWFSLIDTTNPSPYKIEYSWMYDPYLLYNKSQLLEFYDERIFKEYPSSSTLSSSTTTNDYDKISFTFSMASQGFQFFILPDAWLVKMNDNEDNDNDNDGNNNLIFNNLNNNNNNNEYNENFYIVCNSILPDSKIKNNHNPHKKLFNEPLTNEC</sequence>
<organism>
    <name type="scientific">Dictyostelium discoideum</name>
    <name type="common">Social amoeba</name>
    <dbReference type="NCBI Taxonomy" id="44689"/>
    <lineage>
        <taxon>Eukaryota</taxon>
        <taxon>Amoebozoa</taxon>
        <taxon>Evosea</taxon>
        <taxon>Eumycetozoa</taxon>
        <taxon>Dictyostelia</taxon>
        <taxon>Dictyosteliales</taxon>
        <taxon>Dictyosteliaceae</taxon>
        <taxon>Dictyostelium</taxon>
    </lineage>
</organism>
<comment type="subcellular location">
    <subcellularLocation>
        <location evidence="4">Membrane</location>
        <topology evidence="4">Single-pass type II membrane protein</topology>
    </subcellularLocation>
</comment>
<comment type="developmental stage">
    <text evidence="3">Expression peaks at mid- to late-stages of development.</text>
</comment>
<comment type="similarity">
    <text evidence="4">Belongs to the glycosyltransferase 8 family. Highly divergent.</text>
</comment>
<protein>
    <recommendedName>
        <fullName>Glycosyltransferase-like protein gnt12</fullName>
    </recommendedName>
</protein>